<comment type="function">
    <text evidence="1">Probably involved in ribonucleotide reductase function.</text>
</comment>
<comment type="similarity">
    <text evidence="1">Belongs to the NrdI family.</text>
</comment>
<proteinExistence type="inferred from homology"/>
<evidence type="ECO:0000255" key="1">
    <source>
        <dbReference type="HAMAP-Rule" id="MF_00128"/>
    </source>
</evidence>
<reference key="1">
    <citation type="journal article" date="2007" name="BMC Microbiol.">
        <title>Subtle genetic changes enhance virulence of methicillin resistant and sensitive Staphylococcus aureus.</title>
        <authorList>
            <person name="Highlander S.K."/>
            <person name="Hulten K.G."/>
            <person name="Qin X."/>
            <person name="Jiang H."/>
            <person name="Yerrapragada S."/>
            <person name="Mason E.O. Jr."/>
            <person name="Shang Y."/>
            <person name="Williams T.M."/>
            <person name="Fortunov R.M."/>
            <person name="Liu Y."/>
            <person name="Igboeli O."/>
            <person name="Petrosino J."/>
            <person name="Tirumalai M."/>
            <person name="Uzman A."/>
            <person name="Fox G.E."/>
            <person name="Cardenas A.M."/>
            <person name="Muzny D.M."/>
            <person name="Hemphill L."/>
            <person name="Ding Y."/>
            <person name="Dugan S."/>
            <person name="Blyth P.R."/>
            <person name="Buhay C.J."/>
            <person name="Dinh H.H."/>
            <person name="Hawes A.C."/>
            <person name="Holder M."/>
            <person name="Kovar C.L."/>
            <person name="Lee S.L."/>
            <person name="Liu W."/>
            <person name="Nazareth L.V."/>
            <person name="Wang Q."/>
            <person name="Zhou J."/>
            <person name="Kaplan S.L."/>
            <person name="Weinstock G.M."/>
        </authorList>
    </citation>
    <scope>NUCLEOTIDE SEQUENCE [LARGE SCALE GENOMIC DNA]</scope>
    <source>
        <strain>USA300 / TCH1516</strain>
    </source>
</reference>
<organism>
    <name type="scientific">Staphylococcus aureus (strain USA300 / TCH1516)</name>
    <dbReference type="NCBI Taxonomy" id="451516"/>
    <lineage>
        <taxon>Bacteria</taxon>
        <taxon>Bacillati</taxon>
        <taxon>Bacillota</taxon>
        <taxon>Bacilli</taxon>
        <taxon>Bacillales</taxon>
        <taxon>Staphylococcaceae</taxon>
        <taxon>Staphylococcus</taxon>
    </lineage>
</organism>
<dbReference type="EMBL" id="CP000730">
    <property type="protein sequence ID" value="ABX28775.1"/>
    <property type="molecule type" value="Genomic_DNA"/>
</dbReference>
<dbReference type="RefSeq" id="WP_000692521.1">
    <property type="nucleotide sequence ID" value="NC_010079.1"/>
</dbReference>
<dbReference type="SMR" id="A8Z002"/>
<dbReference type="KEGG" id="sax:USA300HOU_0754"/>
<dbReference type="HOGENOM" id="CLU_114845_3_0_9"/>
<dbReference type="GO" id="GO:0010181">
    <property type="term" value="F:FMN binding"/>
    <property type="evidence" value="ECO:0007669"/>
    <property type="project" value="InterPro"/>
</dbReference>
<dbReference type="GO" id="GO:0036211">
    <property type="term" value="P:protein modification process"/>
    <property type="evidence" value="ECO:0007669"/>
    <property type="project" value="InterPro"/>
</dbReference>
<dbReference type="Gene3D" id="3.40.50.360">
    <property type="match status" value="1"/>
</dbReference>
<dbReference type="HAMAP" id="MF_00128">
    <property type="entry name" value="NrdI"/>
    <property type="match status" value="1"/>
</dbReference>
<dbReference type="InterPro" id="IPR029039">
    <property type="entry name" value="Flavoprotein-like_sf"/>
</dbReference>
<dbReference type="InterPro" id="IPR020852">
    <property type="entry name" value="RNR_Ib_NrdI_bac"/>
</dbReference>
<dbReference type="InterPro" id="IPR004465">
    <property type="entry name" value="RNR_NrdI"/>
</dbReference>
<dbReference type="NCBIfam" id="TIGR00333">
    <property type="entry name" value="nrdI"/>
    <property type="match status" value="1"/>
</dbReference>
<dbReference type="PANTHER" id="PTHR37297">
    <property type="entry name" value="PROTEIN NRDI"/>
    <property type="match status" value="1"/>
</dbReference>
<dbReference type="PANTHER" id="PTHR37297:SF1">
    <property type="entry name" value="PROTEIN NRDI"/>
    <property type="match status" value="1"/>
</dbReference>
<dbReference type="Pfam" id="PF07972">
    <property type="entry name" value="Flavodoxin_NdrI"/>
    <property type="match status" value="1"/>
</dbReference>
<dbReference type="PIRSF" id="PIRSF005087">
    <property type="entry name" value="NrdI"/>
    <property type="match status" value="1"/>
</dbReference>
<dbReference type="SUPFAM" id="SSF52218">
    <property type="entry name" value="Flavoproteins"/>
    <property type="match status" value="1"/>
</dbReference>
<sequence length="132" mass="15166">MKIIYFSFTGNVRRFIKRTELENTLEITAENCMEPVHEPFIIVTGTIGFGEVPEPVQSFLEVNHQYIRGVAASGNRNWGLNFAKAGRTISEEYNVPLLMKFELHGKNKDVIEFKNKVGNFNENHGREKVQSY</sequence>
<gene>
    <name evidence="1" type="primary">nrdI</name>
    <name type="ordered locus">USA300HOU_0754</name>
</gene>
<feature type="chain" id="PRO_1000076304" description="Protein NrdI">
    <location>
        <begin position="1"/>
        <end position="132"/>
    </location>
</feature>
<accession>A8Z002</accession>
<protein>
    <recommendedName>
        <fullName evidence="1">Protein NrdI</fullName>
    </recommendedName>
</protein>
<name>NRDI_STAAT</name>